<gene>
    <name type="primary">RGS1</name>
    <name type="synonym">1R20</name>
    <name type="synonym">BL34</name>
    <name type="synonym">IER1</name>
</gene>
<keyword id="KW-0002">3D-structure</keyword>
<keyword id="KW-0025">Alternative splicing</keyword>
<keyword id="KW-1003">Cell membrane</keyword>
<keyword id="KW-0963">Cytoplasm</keyword>
<keyword id="KW-0343">GTPase activation</keyword>
<keyword id="KW-0472">Membrane</keyword>
<keyword id="KW-1267">Proteomics identification</keyword>
<keyword id="KW-1185">Reference proteome</keyword>
<keyword id="KW-0734">Signal transduction inhibitor</keyword>
<organism>
    <name type="scientific">Homo sapiens</name>
    <name type="common">Human</name>
    <dbReference type="NCBI Taxonomy" id="9606"/>
    <lineage>
        <taxon>Eukaryota</taxon>
        <taxon>Metazoa</taxon>
        <taxon>Chordata</taxon>
        <taxon>Craniata</taxon>
        <taxon>Vertebrata</taxon>
        <taxon>Euteleostomi</taxon>
        <taxon>Mammalia</taxon>
        <taxon>Eutheria</taxon>
        <taxon>Euarchontoglires</taxon>
        <taxon>Primates</taxon>
        <taxon>Haplorrhini</taxon>
        <taxon>Catarrhini</taxon>
        <taxon>Hominidae</taxon>
        <taxon>Homo</taxon>
    </lineage>
</organism>
<dbReference type="EMBL" id="AK303138">
    <property type="protein sequence ID" value="BAG64242.1"/>
    <property type="status" value="ALT_INIT"/>
    <property type="molecule type" value="mRNA"/>
</dbReference>
<dbReference type="EMBL" id="AK315607">
    <property type="protein sequence ID" value="BAG37976.1"/>
    <property type="status" value="ALT_INIT"/>
    <property type="molecule type" value="mRNA"/>
</dbReference>
<dbReference type="EMBL" id="AL136987">
    <property type="status" value="NOT_ANNOTATED_CDS"/>
    <property type="molecule type" value="Genomic_DNA"/>
</dbReference>
<dbReference type="EMBL" id="BC015510">
    <property type="protein sequence ID" value="AAH15510.1"/>
    <property type="status" value="ALT_INIT"/>
    <property type="molecule type" value="mRNA"/>
</dbReference>
<dbReference type="EMBL" id="S59049">
    <property type="protein sequence ID" value="AAB26289.1"/>
    <property type="status" value="ALT_INIT"/>
    <property type="molecule type" value="mRNA"/>
</dbReference>
<dbReference type="EMBL" id="X73427">
    <property type="protein sequence ID" value="CAA51826.1"/>
    <property type="status" value="ALT_INIT"/>
    <property type="molecule type" value="mRNA"/>
</dbReference>
<dbReference type="EMBL" id="AF493925">
    <property type="protein sequence ID" value="AAM12639.1"/>
    <property type="molecule type" value="mRNA"/>
</dbReference>
<dbReference type="EMBL" id="BT006668">
    <property type="protein sequence ID" value="AAP35314.1"/>
    <property type="molecule type" value="mRNA"/>
</dbReference>
<dbReference type="CCDS" id="CCDS1375.2">
    <molecule id="Q08116-1"/>
</dbReference>
<dbReference type="PIR" id="S43436">
    <property type="entry name" value="S43436"/>
</dbReference>
<dbReference type="RefSeq" id="NP_002913.3">
    <molecule id="Q08116-1"/>
    <property type="nucleotide sequence ID" value="NM_002922.3"/>
</dbReference>
<dbReference type="PDB" id="2BV1">
    <property type="method" value="X-ray"/>
    <property type="resolution" value="2.00 A"/>
    <property type="chains" value="A/B=63-205"/>
</dbReference>
<dbReference type="PDB" id="2GTP">
    <property type="method" value="X-ray"/>
    <property type="resolution" value="2.55 A"/>
    <property type="chains" value="C/D=63-205"/>
</dbReference>
<dbReference type="PDBsum" id="2BV1"/>
<dbReference type="PDBsum" id="2GTP"/>
<dbReference type="SMR" id="Q08116"/>
<dbReference type="BioGRID" id="111928">
    <property type="interactions" value="8"/>
</dbReference>
<dbReference type="DIP" id="DIP-59091N"/>
<dbReference type="FunCoup" id="Q08116">
    <property type="interactions" value="497"/>
</dbReference>
<dbReference type="IntAct" id="Q08116">
    <property type="interactions" value="7"/>
</dbReference>
<dbReference type="STRING" id="9606.ENSP00000356429"/>
<dbReference type="GlyGen" id="Q08116">
    <property type="glycosylation" value="2 sites, 1 O-linked glycan (2 sites)"/>
</dbReference>
<dbReference type="iPTMnet" id="Q08116"/>
<dbReference type="PhosphoSitePlus" id="Q08116"/>
<dbReference type="BioMuta" id="RGS1"/>
<dbReference type="DMDM" id="229470360"/>
<dbReference type="jPOST" id="Q08116"/>
<dbReference type="MassIVE" id="Q08116"/>
<dbReference type="PaxDb" id="9606-ENSP00000356429"/>
<dbReference type="PeptideAtlas" id="Q08116"/>
<dbReference type="ProteomicsDB" id="58570">
    <molecule id="Q08116-1"/>
</dbReference>
<dbReference type="ProteomicsDB" id="58571">
    <molecule id="Q08116-2"/>
</dbReference>
<dbReference type="Antibodypedia" id="34458">
    <property type="antibodies" value="346 antibodies from 32 providers"/>
</dbReference>
<dbReference type="DNASU" id="5996"/>
<dbReference type="Ensembl" id="ENST00000367459.8">
    <molecule id="Q08116-1"/>
    <property type="protein sequence ID" value="ENSP00000356429.3"/>
    <property type="gene ID" value="ENSG00000090104.12"/>
</dbReference>
<dbReference type="Ensembl" id="ENST00000469578.2">
    <molecule id="Q08116-2"/>
    <property type="protein sequence ID" value="ENSP00000464323.1"/>
    <property type="gene ID" value="ENSG00000090104.12"/>
</dbReference>
<dbReference type="GeneID" id="5996"/>
<dbReference type="KEGG" id="hsa:5996"/>
<dbReference type="MANE-Select" id="ENST00000367459.8">
    <property type="protein sequence ID" value="ENSP00000356429.3"/>
    <property type="RefSeq nucleotide sequence ID" value="NM_002922.4"/>
    <property type="RefSeq protein sequence ID" value="NP_002913.3"/>
</dbReference>
<dbReference type="UCSC" id="uc001gsi.2">
    <molecule id="Q08116-1"/>
    <property type="organism name" value="human"/>
</dbReference>
<dbReference type="AGR" id="HGNC:9991"/>
<dbReference type="CTD" id="5996"/>
<dbReference type="DisGeNET" id="5996"/>
<dbReference type="GeneCards" id="RGS1"/>
<dbReference type="HGNC" id="HGNC:9991">
    <property type="gene designation" value="RGS1"/>
</dbReference>
<dbReference type="HPA" id="ENSG00000090104">
    <property type="expression patterns" value="Tissue enhanced (brain)"/>
</dbReference>
<dbReference type="MIM" id="600323">
    <property type="type" value="gene"/>
</dbReference>
<dbReference type="neXtProt" id="NX_Q08116"/>
<dbReference type="OpenTargets" id="ENSG00000090104"/>
<dbReference type="PharmGKB" id="PA34361"/>
<dbReference type="VEuPathDB" id="HostDB:ENSG00000090104"/>
<dbReference type="eggNOG" id="KOG3589">
    <property type="taxonomic scope" value="Eukaryota"/>
</dbReference>
<dbReference type="GeneTree" id="ENSGT00940000157316"/>
<dbReference type="HOGENOM" id="CLU_059863_3_3_1"/>
<dbReference type="InParanoid" id="Q08116"/>
<dbReference type="OMA" id="CMVPHIE"/>
<dbReference type="OrthoDB" id="196547at2759"/>
<dbReference type="PAN-GO" id="Q08116">
    <property type="GO annotations" value="0 GO annotations based on evolutionary models"/>
</dbReference>
<dbReference type="PhylomeDB" id="Q08116"/>
<dbReference type="TreeFam" id="TF315837"/>
<dbReference type="PathwayCommons" id="Q08116"/>
<dbReference type="Reactome" id="R-HSA-416476">
    <property type="pathway name" value="G alpha (q) signalling events"/>
</dbReference>
<dbReference type="Reactome" id="R-HSA-418594">
    <property type="pathway name" value="G alpha (i) signalling events"/>
</dbReference>
<dbReference type="SignaLink" id="Q08116"/>
<dbReference type="BioGRID-ORCS" id="5996">
    <property type="hits" value="9 hits in 1135 CRISPR screens"/>
</dbReference>
<dbReference type="ChiTaRS" id="RGS1">
    <property type="organism name" value="human"/>
</dbReference>
<dbReference type="EvolutionaryTrace" id="Q08116"/>
<dbReference type="GeneWiki" id="RGS1"/>
<dbReference type="GenomeRNAi" id="5996"/>
<dbReference type="Pharos" id="Q08116">
    <property type="development level" value="Tbio"/>
</dbReference>
<dbReference type="PRO" id="PR:Q08116"/>
<dbReference type="Proteomes" id="UP000005640">
    <property type="component" value="Chromosome 1"/>
</dbReference>
<dbReference type="RNAct" id="Q08116">
    <property type="molecule type" value="protein"/>
</dbReference>
<dbReference type="Bgee" id="ENSG00000090104">
    <property type="expression patterns" value="Expressed in C1 segment of cervical spinal cord and 173 other cell types or tissues"/>
</dbReference>
<dbReference type="GO" id="GO:0009898">
    <property type="term" value="C:cytoplasmic side of plasma membrane"/>
    <property type="evidence" value="ECO:0000314"/>
    <property type="project" value="UniProtKB"/>
</dbReference>
<dbReference type="GO" id="GO:0005829">
    <property type="term" value="C:cytosol"/>
    <property type="evidence" value="ECO:0000314"/>
    <property type="project" value="UniProtKB"/>
</dbReference>
<dbReference type="GO" id="GO:0005886">
    <property type="term" value="C:plasma membrane"/>
    <property type="evidence" value="ECO:0000304"/>
    <property type="project" value="Reactome"/>
</dbReference>
<dbReference type="GO" id="GO:0005516">
    <property type="term" value="F:calmodulin binding"/>
    <property type="evidence" value="ECO:0000304"/>
    <property type="project" value="ProtInc"/>
</dbReference>
<dbReference type="GO" id="GO:0001965">
    <property type="term" value="F:G-protein alpha-subunit binding"/>
    <property type="evidence" value="ECO:0000353"/>
    <property type="project" value="UniProtKB"/>
</dbReference>
<dbReference type="GO" id="GO:0005096">
    <property type="term" value="F:GTPase activator activity"/>
    <property type="evidence" value="ECO:0000314"/>
    <property type="project" value="UniProtKB"/>
</dbReference>
<dbReference type="GO" id="GO:0003924">
    <property type="term" value="F:GTPase activity"/>
    <property type="evidence" value="ECO:0000304"/>
    <property type="project" value="Reactome"/>
</dbReference>
<dbReference type="GO" id="GO:0007193">
    <property type="term" value="P:adenylate cyclase-inhibiting G protein-coupled receptor signaling pathway"/>
    <property type="evidence" value="ECO:0000304"/>
    <property type="project" value="ProtInc"/>
</dbReference>
<dbReference type="GO" id="GO:0007186">
    <property type="term" value="P:G protein-coupled receptor signaling pathway"/>
    <property type="evidence" value="ECO:0000314"/>
    <property type="project" value="UniProtKB"/>
</dbReference>
<dbReference type="GO" id="GO:0006955">
    <property type="term" value="P:immune response"/>
    <property type="evidence" value="ECO:0000304"/>
    <property type="project" value="ProtInc"/>
</dbReference>
<dbReference type="GO" id="GO:0061737">
    <property type="term" value="P:leukotriene signaling pathway"/>
    <property type="evidence" value="ECO:0000314"/>
    <property type="project" value="UniProtKB"/>
</dbReference>
<dbReference type="GO" id="GO:0009968">
    <property type="term" value="P:negative regulation of signal transduction"/>
    <property type="evidence" value="ECO:0007669"/>
    <property type="project" value="UniProtKB-KW"/>
</dbReference>
<dbReference type="GO" id="GO:0043547">
    <property type="term" value="P:positive regulation of GTPase activity"/>
    <property type="evidence" value="ECO:0000314"/>
    <property type="project" value="UniProtKB"/>
</dbReference>
<dbReference type="GO" id="GO:0009617">
    <property type="term" value="P:response to bacterium"/>
    <property type="evidence" value="ECO:0007669"/>
    <property type="project" value="Ensembl"/>
</dbReference>
<dbReference type="GO" id="GO:0007165">
    <property type="term" value="P:signal transduction"/>
    <property type="evidence" value="ECO:0000314"/>
    <property type="project" value="UniProtKB"/>
</dbReference>
<dbReference type="CDD" id="cd08715">
    <property type="entry name" value="RGS_RGS1"/>
    <property type="match status" value="1"/>
</dbReference>
<dbReference type="FunFam" id="1.10.167.10:FF:000001">
    <property type="entry name" value="Putative regulator of g-protein signaling 12"/>
    <property type="match status" value="1"/>
</dbReference>
<dbReference type="FunFam" id="1.10.196.10:FF:000009">
    <property type="entry name" value="Regulator of G-protein signaling 1"/>
    <property type="match status" value="1"/>
</dbReference>
<dbReference type="Gene3D" id="1.10.196.10">
    <property type="match status" value="2"/>
</dbReference>
<dbReference type="Gene3D" id="1.10.167.10">
    <property type="entry name" value="Regulator of G-protein Signalling 4, domain 2"/>
    <property type="match status" value="1"/>
</dbReference>
<dbReference type="IDEAL" id="IID00609"/>
<dbReference type="InterPro" id="IPR016137">
    <property type="entry name" value="RGS"/>
</dbReference>
<dbReference type="InterPro" id="IPR036305">
    <property type="entry name" value="RGS_sf"/>
</dbReference>
<dbReference type="InterPro" id="IPR024066">
    <property type="entry name" value="RGS_subdom1/3"/>
</dbReference>
<dbReference type="InterPro" id="IPR044926">
    <property type="entry name" value="RGS_subdomain_2"/>
</dbReference>
<dbReference type="PANTHER" id="PTHR10845">
    <property type="entry name" value="REGULATOR OF G PROTEIN SIGNALING"/>
    <property type="match status" value="1"/>
</dbReference>
<dbReference type="PANTHER" id="PTHR10845:SF34">
    <property type="entry name" value="REGULATOR OF G-PROTEIN SIGNALING 1"/>
    <property type="match status" value="1"/>
</dbReference>
<dbReference type="Pfam" id="PF00615">
    <property type="entry name" value="RGS"/>
    <property type="match status" value="1"/>
</dbReference>
<dbReference type="PRINTS" id="PR01301">
    <property type="entry name" value="RGSPROTEIN"/>
</dbReference>
<dbReference type="SMART" id="SM00315">
    <property type="entry name" value="RGS"/>
    <property type="match status" value="1"/>
</dbReference>
<dbReference type="SUPFAM" id="SSF48097">
    <property type="entry name" value="Regulator of G-protein signaling, RGS"/>
    <property type="match status" value="1"/>
</dbReference>
<dbReference type="PROSITE" id="PS50132">
    <property type="entry name" value="RGS"/>
    <property type="match status" value="1"/>
</dbReference>
<evidence type="ECO:0000250" key="1">
    <source>
        <dbReference type="UniProtKB" id="Q9JL25"/>
    </source>
</evidence>
<evidence type="ECO:0000255" key="2">
    <source>
        <dbReference type="PROSITE-ProRule" id="PRU00171"/>
    </source>
</evidence>
<evidence type="ECO:0000269" key="3">
    <source>
    </source>
</evidence>
<evidence type="ECO:0000269" key="4">
    <source>
    </source>
</evidence>
<evidence type="ECO:0000269" key="5">
    <source>
    </source>
</evidence>
<evidence type="ECO:0000303" key="6">
    <source>
    </source>
</evidence>
<evidence type="ECO:0000303" key="7">
    <source>
    </source>
</evidence>
<evidence type="ECO:0000305" key="8"/>
<evidence type="ECO:0007829" key="9">
    <source>
        <dbReference type="PDB" id="2BV1"/>
    </source>
</evidence>
<proteinExistence type="evidence at protein level"/>
<name>RGS1_HUMAN</name>
<accession>Q08116</accession>
<accession>B2RDM9</accession>
<accession>B4DZY0</accession>
<accession>Q07918</accession>
<accession>Q9H1W2</accession>
<comment type="function">
    <text evidence="1 3 4">Regulates G protein-coupled receptor signaling cascades, including signaling downstream of the N-formylpeptide chemoattractant receptors and leukotriene receptors (PubMed:10480894). Inhibits B cell chemotaxis toward CXCL12 (By similarity). Inhibits signal transduction by increasing the GTPase activity of G protein alpha subunits thereby driving them into their inactive GDP-bound form (PubMed:10480894, PubMed:18434541).</text>
</comment>
<comment type="subunit">
    <text evidence="4">Interacts with GNAI1 and GNAQ.</text>
</comment>
<comment type="subcellular location">
    <subcellularLocation>
        <location evidence="3">Cell membrane</location>
        <topology evidence="3">Peripheral membrane protein</topology>
        <orientation evidence="3">Cytoplasmic side</orientation>
    </subcellularLocation>
    <subcellularLocation>
        <location evidence="3">Cytoplasm</location>
        <location evidence="3">Cytosol</location>
    </subcellularLocation>
</comment>
<comment type="alternative products">
    <event type="alternative splicing"/>
    <isoform>
        <id>Q08116-1</id>
        <name>1</name>
        <sequence type="displayed"/>
    </isoform>
    <isoform>
        <id>Q08116-2</id>
        <name>2</name>
        <sequence type="described" ref="VSP_036422"/>
    </isoform>
</comment>
<comment type="tissue specificity">
    <text evidence="3 5">Detected in peripheral blood monocytes (PubMed:10480894). Expression is relatively low in B-cells and chronic lymphocytic leukemia B-cells; however, in other types of malignant B-cell such as non-Hodgkin lymphoma and hairy cell leukemia, expression is constitutively high (PubMed:8473738).</text>
</comment>
<comment type="induction">
    <text evidence="5">In response to several B-cell activation signals.</text>
</comment>
<comment type="sequence caution" evidence="8">
    <conflict type="erroneous initiation">
        <sequence resource="EMBL-CDS" id="AAB26289"/>
    </conflict>
</comment>
<comment type="sequence caution" evidence="8">
    <conflict type="erroneous initiation">
        <sequence resource="EMBL-CDS" id="AAH15510"/>
    </conflict>
</comment>
<comment type="sequence caution" evidence="8">
    <conflict type="erroneous initiation">
        <sequence resource="EMBL-CDS" id="BAG37976"/>
    </conflict>
</comment>
<comment type="sequence caution" evidence="8">
    <conflict type="erroneous initiation">
        <sequence resource="EMBL-CDS" id="BAG64242"/>
    </conflict>
</comment>
<comment type="sequence caution" evidence="8">
    <conflict type="erroneous initiation">
        <sequence resource="EMBL-CDS" id="CAA51826"/>
    </conflict>
</comment>
<protein>
    <recommendedName>
        <fullName>Regulator of G-protein signaling 1</fullName>
        <shortName>RGS1</shortName>
    </recommendedName>
    <alternativeName>
        <fullName evidence="7">B-cell activation protein BL34</fullName>
    </alternativeName>
    <alternativeName>
        <fullName>Early response protein 1R20</fullName>
    </alternativeName>
</protein>
<reference key="1">
    <citation type="journal article" date="2004" name="Nat. Genet.">
        <title>Complete sequencing and characterization of 21,243 full-length human cDNAs.</title>
        <authorList>
            <person name="Ota T."/>
            <person name="Suzuki Y."/>
            <person name="Nishikawa T."/>
            <person name="Otsuki T."/>
            <person name="Sugiyama T."/>
            <person name="Irie R."/>
            <person name="Wakamatsu A."/>
            <person name="Hayashi K."/>
            <person name="Sato H."/>
            <person name="Nagai K."/>
            <person name="Kimura K."/>
            <person name="Makita H."/>
            <person name="Sekine M."/>
            <person name="Obayashi M."/>
            <person name="Nishi T."/>
            <person name="Shibahara T."/>
            <person name="Tanaka T."/>
            <person name="Ishii S."/>
            <person name="Yamamoto J."/>
            <person name="Saito K."/>
            <person name="Kawai Y."/>
            <person name="Isono Y."/>
            <person name="Nakamura Y."/>
            <person name="Nagahari K."/>
            <person name="Murakami K."/>
            <person name="Yasuda T."/>
            <person name="Iwayanagi T."/>
            <person name="Wagatsuma M."/>
            <person name="Shiratori A."/>
            <person name="Sudo H."/>
            <person name="Hosoiri T."/>
            <person name="Kaku Y."/>
            <person name="Kodaira H."/>
            <person name="Kondo H."/>
            <person name="Sugawara M."/>
            <person name="Takahashi M."/>
            <person name="Kanda K."/>
            <person name="Yokoi T."/>
            <person name="Furuya T."/>
            <person name="Kikkawa E."/>
            <person name="Omura Y."/>
            <person name="Abe K."/>
            <person name="Kamihara K."/>
            <person name="Katsuta N."/>
            <person name="Sato K."/>
            <person name="Tanikawa M."/>
            <person name="Yamazaki M."/>
            <person name="Ninomiya K."/>
            <person name="Ishibashi T."/>
            <person name="Yamashita H."/>
            <person name="Murakawa K."/>
            <person name="Fujimori K."/>
            <person name="Tanai H."/>
            <person name="Kimata M."/>
            <person name="Watanabe M."/>
            <person name="Hiraoka S."/>
            <person name="Chiba Y."/>
            <person name="Ishida S."/>
            <person name="Ono Y."/>
            <person name="Takiguchi S."/>
            <person name="Watanabe S."/>
            <person name="Yosida M."/>
            <person name="Hotuta T."/>
            <person name="Kusano J."/>
            <person name="Kanehori K."/>
            <person name="Takahashi-Fujii A."/>
            <person name="Hara H."/>
            <person name="Tanase T.-O."/>
            <person name="Nomura Y."/>
            <person name="Togiya S."/>
            <person name="Komai F."/>
            <person name="Hara R."/>
            <person name="Takeuchi K."/>
            <person name="Arita M."/>
            <person name="Imose N."/>
            <person name="Musashino K."/>
            <person name="Yuuki H."/>
            <person name="Oshima A."/>
            <person name="Sasaki N."/>
            <person name="Aotsuka S."/>
            <person name="Yoshikawa Y."/>
            <person name="Matsunawa H."/>
            <person name="Ichihara T."/>
            <person name="Shiohata N."/>
            <person name="Sano S."/>
            <person name="Moriya S."/>
            <person name="Momiyama H."/>
            <person name="Satoh N."/>
            <person name="Takami S."/>
            <person name="Terashima Y."/>
            <person name="Suzuki O."/>
            <person name="Nakagawa S."/>
            <person name="Senoh A."/>
            <person name="Mizoguchi H."/>
            <person name="Goto Y."/>
            <person name="Shimizu F."/>
            <person name="Wakebe H."/>
            <person name="Hishigaki H."/>
            <person name="Watanabe T."/>
            <person name="Sugiyama A."/>
            <person name="Takemoto M."/>
            <person name="Kawakami B."/>
            <person name="Yamazaki M."/>
            <person name="Watanabe K."/>
            <person name="Kumagai A."/>
            <person name="Itakura S."/>
            <person name="Fukuzumi Y."/>
            <person name="Fujimori Y."/>
            <person name="Komiyama M."/>
            <person name="Tashiro H."/>
            <person name="Tanigami A."/>
            <person name="Fujiwara T."/>
            <person name="Ono T."/>
            <person name="Yamada K."/>
            <person name="Fujii Y."/>
            <person name="Ozaki K."/>
            <person name="Hirao M."/>
            <person name="Ohmori Y."/>
            <person name="Kawabata A."/>
            <person name="Hikiji T."/>
            <person name="Kobatake N."/>
            <person name="Inagaki H."/>
            <person name="Ikema Y."/>
            <person name="Okamoto S."/>
            <person name="Okitani R."/>
            <person name="Kawakami T."/>
            <person name="Noguchi S."/>
            <person name="Itoh T."/>
            <person name="Shigeta K."/>
            <person name="Senba T."/>
            <person name="Matsumura K."/>
            <person name="Nakajima Y."/>
            <person name="Mizuno T."/>
            <person name="Morinaga M."/>
            <person name="Sasaki M."/>
            <person name="Togashi T."/>
            <person name="Oyama M."/>
            <person name="Hata H."/>
            <person name="Watanabe M."/>
            <person name="Komatsu T."/>
            <person name="Mizushima-Sugano J."/>
            <person name="Satoh T."/>
            <person name="Shirai Y."/>
            <person name="Takahashi Y."/>
            <person name="Nakagawa K."/>
            <person name="Okumura K."/>
            <person name="Nagase T."/>
            <person name="Nomura N."/>
            <person name="Kikuchi H."/>
            <person name="Masuho Y."/>
            <person name="Yamashita R."/>
            <person name="Nakai K."/>
            <person name="Yada T."/>
            <person name="Nakamura Y."/>
            <person name="Ohara O."/>
            <person name="Isogai T."/>
            <person name="Sugano S."/>
        </authorList>
    </citation>
    <scope>NUCLEOTIDE SEQUENCE [LARGE SCALE MRNA] (ISOFORMS 1 AND 2)</scope>
    <source>
        <tissue>Skeletal muscle</tissue>
        <tissue>Thymus</tissue>
    </source>
</reference>
<reference key="2">
    <citation type="journal article" date="2006" name="Nature">
        <title>The DNA sequence and biological annotation of human chromosome 1.</title>
        <authorList>
            <person name="Gregory S.G."/>
            <person name="Barlow K.F."/>
            <person name="McLay K.E."/>
            <person name="Kaul R."/>
            <person name="Swarbreck D."/>
            <person name="Dunham A."/>
            <person name="Scott C.E."/>
            <person name="Howe K.L."/>
            <person name="Woodfine K."/>
            <person name="Spencer C.C.A."/>
            <person name="Jones M.C."/>
            <person name="Gillson C."/>
            <person name="Searle S."/>
            <person name="Zhou Y."/>
            <person name="Kokocinski F."/>
            <person name="McDonald L."/>
            <person name="Evans R."/>
            <person name="Phillips K."/>
            <person name="Atkinson A."/>
            <person name="Cooper R."/>
            <person name="Jones C."/>
            <person name="Hall R.E."/>
            <person name="Andrews T.D."/>
            <person name="Lloyd C."/>
            <person name="Ainscough R."/>
            <person name="Almeida J.P."/>
            <person name="Ambrose K.D."/>
            <person name="Anderson F."/>
            <person name="Andrew R.W."/>
            <person name="Ashwell R.I.S."/>
            <person name="Aubin K."/>
            <person name="Babbage A.K."/>
            <person name="Bagguley C.L."/>
            <person name="Bailey J."/>
            <person name="Beasley H."/>
            <person name="Bethel G."/>
            <person name="Bird C.P."/>
            <person name="Bray-Allen S."/>
            <person name="Brown J.Y."/>
            <person name="Brown A.J."/>
            <person name="Buckley D."/>
            <person name="Burton J."/>
            <person name="Bye J."/>
            <person name="Carder C."/>
            <person name="Chapman J.C."/>
            <person name="Clark S.Y."/>
            <person name="Clarke G."/>
            <person name="Clee C."/>
            <person name="Cobley V."/>
            <person name="Collier R.E."/>
            <person name="Corby N."/>
            <person name="Coville G.J."/>
            <person name="Davies J."/>
            <person name="Deadman R."/>
            <person name="Dunn M."/>
            <person name="Earthrowl M."/>
            <person name="Ellington A.G."/>
            <person name="Errington H."/>
            <person name="Frankish A."/>
            <person name="Frankland J."/>
            <person name="French L."/>
            <person name="Garner P."/>
            <person name="Garnett J."/>
            <person name="Gay L."/>
            <person name="Ghori M.R.J."/>
            <person name="Gibson R."/>
            <person name="Gilby L.M."/>
            <person name="Gillett W."/>
            <person name="Glithero R.J."/>
            <person name="Grafham D.V."/>
            <person name="Griffiths C."/>
            <person name="Griffiths-Jones S."/>
            <person name="Grocock R."/>
            <person name="Hammond S."/>
            <person name="Harrison E.S.I."/>
            <person name="Hart E."/>
            <person name="Haugen E."/>
            <person name="Heath P.D."/>
            <person name="Holmes S."/>
            <person name="Holt K."/>
            <person name="Howden P.J."/>
            <person name="Hunt A.R."/>
            <person name="Hunt S.E."/>
            <person name="Hunter G."/>
            <person name="Isherwood J."/>
            <person name="James R."/>
            <person name="Johnson C."/>
            <person name="Johnson D."/>
            <person name="Joy A."/>
            <person name="Kay M."/>
            <person name="Kershaw J.K."/>
            <person name="Kibukawa M."/>
            <person name="Kimberley A.M."/>
            <person name="King A."/>
            <person name="Knights A.J."/>
            <person name="Lad H."/>
            <person name="Laird G."/>
            <person name="Lawlor S."/>
            <person name="Leongamornlert D.A."/>
            <person name="Lloyd D.M."/>
            <person name="Loveland J."/>
            <person name="Lovell J."/>
            <person name="Lush M.J."/>
            <person name="Lyne R."/>
            <person name="Martin S."/>
            <person name="Mashreghi-Mohammadi M."/>
            <person name="Matthews L."/>
            <person name="Matthews N.S.W."/>
            <person name="McLaren S."/>
            <person name="Milne S."/>
            <person name="Mistry S."/>
            <person name="Moore M.J.F."/>
            <person name="Nickerson T."/>
            <person name="O'Dell C.N."/>
            <person name="Oliver K."/>
            <person name="Palmeiri A."/>
            <person name="Palmer S.A."/>
            <person name="Parker A."/>
            <person name="Patel D."/>
            <person name="Pearce A.V."/>
            <person name="Peck A.I."/>
            <person name="Pelan S."/>
            <person name="Phelps K."/>
            <person name="Phillimore B.J."/>
            <person name="Plumb R."/>
            <person name="Rajan J."/>
            <person name="Raymond C."/>
            <person name="Rouse G."/>
            <person name="Saenphimmachak C."/>
            <person name="Sehra H.K."/>
            <person name="Sheridan E."/>
            <person name="Shownkeen R."/>
            <person name="Sims S."/>
            <person name="Skuce C.D."/>
            <person name="Smith M."/>
            <person name="Steward C."/>
            <person name="Subramanian S."/>
            <person name="Sycamore N."/>
            <person name="Tracey A."/>
            <person name="Tromans A."/>
            <person name="Van Helmond Z."/>
            <person name="Wall M."/>
            <person name="Wallis J.M."/>
            <person name="White S."/>
            <person name="Whitehead S.L."/>
            <person name="Wilkinson J.E."/>
            <person name="Willey D.L."/>
            <person name="Williams H."/>
            <person name="Wilming L."/>
            <person name="Wray P.W."/>
            <person name="Wu Z."/>
            <person name="Coulson A."/>
            <person name="Vaudin M."/>
            <person name="Sulston J.E."/>
            <person name="Durbin R.M."/>
            <person name="Hubbard T."/>
            <person name="Wooster R."/>
            <person name="Dunham I."/>
            <person name="Carter N.P."/>
            <person name="McVean G."/>
            <person name="Ross M.T."/>
            <person name="Harrow J."/>
            <person name="Olson M.V."/>
            <person name="Beck S."/>
            <person name="Rogers J."/>
            <person name="Bentley D.R."/>
        </authorList>
    </citation>
    <scope>NUCLEOTIDE SEQUENCE [LARGE SCALE GENOMIC DNA]</scope>
</reference>
<reference key="3">
    <citation type="journal article" date="2004" name="Genome Res.">
        <title>The status, quality, and expansion of the NIH full-length cDNA project: the Mammalian Gene Collection (MGC).</title>
        <authorList>
            <consortium name="The MGC Project Team"/>
        </authorList>
    </citation>
    <scope>NUCLEOTIDE SEQUENCE [LARGE SCALE MRNA] OF 2-209 (ISOFORM 1)</scope>
    <source>
        <tissue>Skin</tissue>
    </source>
</reference>
<reference key="4">
    <citation type="journal article" date="1993" name="J. Immunol.">
        <title>Isolation and characterization of a novel B cell activation gene.</title>
        <authorList>
            <person name="Hong J.X."/>
            <person name="Wilson G.L."/>
            <person name="Fox C.H."/>
            <person name="Kehrl J.H."/>
        </authorList>
    </citation>
    <scope>NUCLEOTIDE SEQUENCE [MRNA] OF 6-209 (ISOFORM 1)</scope>
    <scope>TISSUE SPECIFICITY</scope>
    <scope>INDUCTION</scope>
    <source>
        <tissue>B-cell</tissue>
    </source>
</reference>
<reference key="5">
    <citation type="journal article" date="1993" name="Biochim. Biophys. Acta">
        <title>A B cell specific immediate early human gene is located on chromosome band 1q31 and encodes an alpha helical basic phosphoprotein.</title>
        <authorList>
            <person name="Newton J.S."/>
            <person name="Deed R.W."/>
            <person name="Mitchell E.L.D."/>
            <person name="Murphy J.J."/>
            <person name="Norton J.D."/>
        </authorList>
    </citation>
    <scope>NUCLEOTIDE SEQUENCE [MRNA] OF 11-209 (ISOFORM 1)</scope>
    <source>
        <tissue>B-cell</tissue>
    </source>
</reference>
<reference key="6">
    <citation type="submission" date="2002-03" db="EMBL/GenBank/DDBJ databases">
        <title>cDNA clones of human proteins involved in signal transduction sequenced by the Guthrie cDNA resource center (www.cdna.org).</title>
        <authorList>
            <person name="Puhl H.L. III"/>
            <person name="Ikeda S.R."/>
            <person name="Aronstam R.S."/>
        </authorList>
    </citation>
    <scope>NUCLEOTIDE SEQUENCE [LARGE SCALE MRNA] OF 14-209 (ISOFORM 1)</scope>
</reference>
<reference key="7">
    <citation type="submission" date="2003-05" db="EMBL/GenBank/DDBJ databases">
        <title>Cloning of human full-length CDSs in BD Creator(TM) system donor vector.</title>
        <authorList>
            <person name="Kalnine N."/>
            <person name="Chen X."/>
            <person name="Rolfs A."/>
            <person name="Halleck A."/>
            <person name="Hines L."/>
            <person name="Eisenstein S."/>
            <person name="Koundinya M."/>
            <person name="Raphael J."/>
            <person name="Moreira D."/>
            <person name="Kelley T."/>
            <person name="LaBaer J."/>
            <person name="Lin Y."/>
            <person name="Phelan M."/>
            <person name="Farmer A."/>
        </authorList>
    </citation>
    <scope>NUCLEOTIDE SEQUENCE [LARGE SCALE MRNA] OF 14-209 (ISOFORM 1)</scope>
</reference>
<reference key="8">
    <citation type="journal article" date="1999" name="J. Biol. Chem.">
        <title>RGS1 is expressed in monocytes and acts as a GTPase-activating protein for G-protein-coupled chemoattractant receptors.</title>
        <authorList>
            <person name="Denecke B."/>
            <person name="Meyerdierks A."/>
            <person name="Boettger E.C."/>
        </authorList>
    </citation>
    <scope>FUNCTION</scope>
    <scope>SUBCELLULAR LOCATION</scope>
    <scope>TISSUE SPECIFICITY</scope>
</reference>
<reference key="9">
    <citation type="journal article" date="2008" name="Proc. Natl. Acad. Sci. U.S.A.">
        <title>Structural diversity in the RGS domain and its interaction with heterotrimeric G protein alpha-subunits.</title>
        <authorList>
            <person name="Soundararajan M."/>
            <person name="Willard F.S."/>
            <person name="Kimple A.J."/>
            <person name="Turnbull A.P."/>
            <person name="Ball L.J."/>
            <person name="Schoch G.A."/>
            <person name="Gileadi C."/>
            <person name="Fedorov O.Y."/>
            <person name="Dowler E.F."/>
            <person name="Higman V.A."/>
            <person name="Hutsell S.Q."/>
            <person name="Sundstroem M."/>
            <person name="Doyle D.A."/>
            <person name="Siderovski D.P."/>
        </authorList>
    </citation>
    <scope>X-RAY CRYSTALLOGRAPHY (2.00 ANGSTROMS) OF 63-205 IN COMPLEX WITH GNAI1</scope>
    <scope>INTERACTION WITH GNAI1 AND GNAQ</scope>
    <scope>FUNCTION</scope>
</reference>
<sequence>MRAAAISTPKLDKMPGMFFSANPKELKGTTHSLLDDKMQKRRPKTFGMDMKAYLRSMIPHLESGMKSSKSKDVLSAAEVMQWSQSLEKLLANQTGQNVFGSFLKSEFSEENIEFWLACEDYKKTESDLLPCKAEEIYKAFVHSDAAKQINIDFRTRESTAKKIKAPTPTCFDEAQKVIYTLMEKDSYPRFLKSDIYLNLLNDLQANSLK</sequence>
<feature type="chain" id="PRO_0000204175" description="Regulator of G-protein signaling 1">
    <location>
        <begin position="1"/>
        <end position="209"/>
    </location>
</feature>
<feature type="domain" description="RGS" evidence="2">
    <location>
        <begin position="85"/>
        <end position="200"/>
    </location>
</feature>
<feature type="splice variant" id="VSP_036422" description="In isoform 2." evidence="6">
    <original>INIDFRTRESTAKKIKAPTPTCFDEAQKVIYTLMEKDSYPRFLKSDIYLNLLNDLQANSLK</original>
    <variation>VSIKLIIISFSIKDPICRNNI</variation>
    <location>
        <begin position="149"/>
        <end position="209"/>
    </location>
</feature>
<feature type="sequence conflict" description="In Ref. 1; BAG37976." evidence="8" ref="1">
    <original>V</original>
    <variation>A</variation>
    <location>
        <position position="177"/>
    </location>
</feature>
<feature type="sequence conflict" description="In Ref. 5; CAA51826." evidence="8" ref="5">
    <original>D</original>
    <variation>H</variation>
    <location>
        <position position="194"/>
    </location>
</feature>
<feature type="strand" evidence="9">
    <location>
        <begin position="72"/>
        <end position="75"/>
    </location>
</feature>
<feature type="helix" evidence="9">
    <location>
        <begin position="76"/>
        <end position="81"/>
    </location>
</feature>
<feature type="turn" evidence="9">
    <location>
        <begin position="82"/>
        <end position="84"/>
    </location>
</feature>
<feature type="helix" evidence="9">
    <location>
        <begin position="86"/>
        <end position="91"/>
    </location>
</feature>
<feature type="helix" evidence="9">
    <location>
        <begin position="93"/>
        <end position="105"/>
    </location>
</feature>
<feature type="helix" evidence="9">
    <location>
        <begin position="110"/>
        <end position="122"/>
    </location>
</feature>
<feature type="helix" evidence="9">
    <location>
        <begin position="126"/>
        <end position="128"/>
    </location>
</feature>
<feature type="helix" evidence="9">
    <location>
        <begin position="129"/>
        <end position="140"/>
    </location>
</feature>
<feature type="helix" evidence="9">
    <location>
        <begin position="153"/>
        <end position="163"/>
    </location>
</feature>
<feature type="turn" evidence="9">
    <location>
        <begin position="168"/>
        <end position="171"/>
    </location>
</feature>
<feature type="helix" evidence="9">
    <location>
        <begin position="172"/>
        <end position="184"/>
    </location>
</feature>
<feature type="helix" evidence="9">
    <location>
        <begin position="186"/>
        <end position="191"/>
    </location>
</feature>
<feature type="helix" evidence="9">
    <location>
        <begin position="194"/>
        <end position="202"/>
    </location>
</feature>